<keyword id="KW-0010">Activator</keyword>
<keyword id="KW-0175">Coiled coil</keyword>
<keyword id="KW-0539">Nucleus</keyword>
<keyword id="KW-1185">Reference proteome</keyword>
<keyword id="KW-0804">Transcription</keyword>
<keyword id="KW-0805">Transcription regulation</keyword>
<comment type="function">
    <text evidence="4 7">Component of the Mediator complex, a coactivator involved in the regulated transcription of nearly all RNA polymerase II-dependent genes. Mediator functions as a bridge to convey information from gene-specific regulatory proteins to the basal RNA polymerase II transcription machinery. Mediator is recruited to promoters by direct interactions with regulatory proteins and serves as a scaffold for the assembly of a functional preinitiation complex with RNA polymerase II and the general transcription factors. Required for activated transcription of the MtnA, MtnB and MtnD genes.</text>
</comment>
<comment type="subunit">
    <text evidence="4 5 6">Component of the Mediator complex, which includes at least MED4, MED6, MED14, MED17, MED18, MED20, MED21, MED23, MED24, MED27, MED30 and MED31. Interacts with MED10 and MED21.</text>
</comment>
<comment type="interaction">
    <interactant intactId="EBI-187169">
        <id>Q9VS38</id>
    </interactant>
    <interactant intactId="EBI-194372">
        <id>A1ZB42</id>
        <label>MED9</label>
    </interactant>
    <organismsDiffer>false</organismsDiffer>
    <experiments>3</experiments>
</comment>
<comment type="subcellular location">
    <subcellularLocation>
        <location evidence="1">Nucleus</location>
    </subcellularLocation>
</comment>
<comment type="developmental stage">
    <text evidence="4">Maternally encoded. Expression decreases during larval stages then rises during mid-pupal metamorphosis.</text>
</comment>
<comment type="similarity">
    <text evidence="8">Belongs to the Mediator complex subunit 4 family.</text>
</comment>
<organism>
    <name type="scientific">Drosophila melanogaster</name>
    <name type="common">Fruit fly</name>
    <dbReference type="NCBI Taxonomy" id="7227"/>
    <lineage>
        <taxon>Eukaryota</taxon>
        <taxon>Metazoa</taxon>
        <taxon>Ecdysozoa</taxon>
        <taxon>Arthropoda</taxon>
        <taxon>Hexapoda</taxon>
        <taxon>Insecta</taxon>
        <taxon>Pterygota</taxon>
        <taxon>Neoptera</taxon>
        <taxon>Endopterygota</taxon>
        <taxon>Diptera</taxon>
        <taxon>Brachycera</taxon>
        <taxon>Muscomorpha</taxon>
        <taxon>Ephydroidea</taxon>
        <taxon>Drosophilidae</taxon>
        <taxon>Drosophila</taxon>
        <taxon>Sophophora</taxon>
    </lineage>
</organism>
<accession>Q9VS38</accession>
<feature type="chain" id="PRO_0000302070" description="Mediator of RNA polymerase II transcription subunit 4">
    <location>
        <begin position="1"/>
        <end position="258"/>
    </location>
</feature>
<feature type="region of interest" description="Disordered" evidence="3">
    <location>
        <begin position="164"/>
        <end position="208"/>
    </location>
</feature>
<feature type="region of interest" description="Disordered" evidence="3">
    <location>
        <begin position="234"/>
        <end position="258"/>
    </location>
</feature>
<feature type="coiled-coil region" evidence="2">
    <location>
        <begin position="52"/>
        <end position="101"/>
    </location>
</feature>
<feature type="compositionally biased region" description="Polar residues" evidence="3">
    <location>
        <begin position="166"/>
        <end position="190"/>
    </location>
</feature>
<feature type="compositionally biased region" description="Gly residues" evidence="3">
    <location>
        <begin position="194"/>
        <end position="204"/>
    </location>
</feature>
<feature type="compositionally biased region" description="Low complexity" evidence="3">
    <location>
        <begin position="246"/>
        <end position="258"/>
    </location>
</feature>
<dbReference type="EMBL" id="AE014296">
    <property type="protein sequence ID" value="AAF50591.1"/>
    <property type="molecule type" value="Genomic_DNA"/>
</dbReference>
<dbReference type="EMBL" id="AY061502">
    <property type="protein sequence ID" value="AAL29050.1"/>
    <property type="molecule type" value="mRNA"/>
</dbReference>
<dbReference type="RefSeq" id="NP_648094.1">
    <property type="nucleotide sequence ID" value="NM_139837.3"/>
</dbReference>
<dbReference type="SMR" id="Q9VS38"/>
<dbReference type="BioGRID" id="64242">
    <property type="interactions" value="71"/>
</dbReference>
<dbReference type="ComplexPortal" id="CPX-2308">
    <property type="entry name" value="Core mediator complex"/>
</dbReference>
<dbReference type="DIP" id="DIP-18262N"/>
<dbReference type="FunCoup" id="Q9VS38">
    <property type="interactions" value="2456"/>
</dbReference>
<dbReference type="IntAct" id="Q9VS38">
    <property type="interactions" value="60"/>
</dbReference>
<dbReference type="STRING" id="7227.FBpp0076599"/>
<dbReference type="PaxDb" id="7227-FBpp0076599"/>
<dbReference type="DNASU" id="38799"/>
<dbReference type="EnsemblMetazoa" id="FBtr0076889">
    <property type="protein sequence ID" value="FBpp0076599"/>
    <property type="gene ID" value="FBgn0035754"/>
</dbReference>
<dbReference type="GeneID" id="38799"/>
<dbReference type="KEGG" id="dme:Dmel_CG8609"/>
<dbReference type="AGR" id="FB:FBgn0035754"/>
<dbReference type="CTD" id="29079"/>
<dbReference type="FlyBase" id="FBgn0035754">
    <property type="gene designation" value="MED4"/>
</dbReference>
<dbReference type="VEuPathDB" id="VectorBase:FBgn0035754"/>
<dbReference type="eggNOG" id="KOG4552">
    <property type="taxonomic scope" value="Eukaryota"/>
</dbReference>
<dbReference type="GeneTree" id="ENSGT00390000012063"/>
<dbReference type="HOGENOM" id="CLU_082233_1_0_1"/>
<dbReference type="InParanoid" id="Q9VS38"/>
<dbReference type="OMA" id="LEMRLGM"/>
<dbReference type="OrthoDB" id="1929813at2759"/>
<dbReference type="PhylomeDB" id="Q9VS38"/>
<dbReference type="Reactome" id="R-DME-9841922">
    <property type="pathway name" value="MLL4 and MLL3 complexes regulate expression of PPARG target genes in adipogenesis and hepatic steatosis"/>
</dbReference>
<dbReference type="BioGRID-ORCS" id="38799">
    <property type="hits" value="0 hits in 1 CRISPR screen"/>
</dbReference>
<dbReference type="GenomeRNAi" id="38799"/>
<dbReference type="PRO" id="PR:Q9VS38"/>
<dbReference type="Proteomes" id="UP000000803">
    <property type="component" value="Chromosome 3L"/>
</dbReference>
<dbReference type="Bgee" id="FBgn0035754">
    <property type="expression patterns" value="Expressed in adult class III enteroendocrine cell in adult midgut (Drosophila) and 58 other cell types or tissues"/>
</dbReference>
<dbReference type="GO" id="GO:0070847">
    <property type="term" value="C:core mediator complex"/>
    <property type="evidence" value="ECO:0000318"/>
    <property type="project" value="GO_Central"/>
</dbReference>
<dbReference type="GO" id="GO:0016592">
    <property type="term" value="C:mediator complex"/>
    <property type="evidence" value="ECO:0000314"/>
    <property type="project" value="UniProtKB"/>
</dbReference>
<dbReference type="GO" id="GO:0005634">
    <property type="term" value="C:nucleus"/>
    <property type="evidence" value="ECO:0000314"/>
    <property type="project" value="FlyBase"/>
</dbReference>
<dbReference type="GO" id="GO:0003712">
    <property type="term" value="F:transcription coregulator activity"/>
    <property type="evidence" value="ECO:0000315"/>
    <property type="project" value="UniProtKB"/>
</dbReference>
<dbReference type="GO" id="GO:0045893">
    <property type="term" value="P:positive regulation of DNA-templated transcription"/>
    <property type="evidence" value="ECO:0007669"/>
    <property type="project" value="GOC"/>
</dbReference>
<dbReference type="GO" id="GO:0006357">
    <property type="term" value="P:regulation of transcription by RNA polymerase II"/>
    <property type="evidence" value="ECO:0000314"/>
    <property type="project" value="FlyBase"/>
</dbReference>
<dbReference type="InterPro" id="IPR019258">
    <property type="entry name" value="Mediator_Med4"/>
</dbReference>
<dbReference type="PANTHER" id="PTHR13208">
    <property type="entry name" value="MEDIATOR OF RNA POLYMERASE II TRANSCRIPTION SUBUNIT 4"/>
    <property type="match status" value="1"/>
</dbReference>
<dbReference type="PANTHER" id="PTHR13208:SF2">
    <property type="entry name" value="MEDIATOR OF RNA POLYMERASE II TRANSCRIPTION SUBUNIT 4"/>
    <property type="match status" value="1"/>
</dbReference>
<dbReference type="Pfam" id="PF10018">
    <property type="entry name" value="Med4"/>
    <property type="match status" value="1"/>
</dbReference>
<name>MED4_DROME</name>
<reference key="1">
    <citation type="journal article" date="2000" name="Science">
        <title>The genome sequence of Drosophila melanogaster.</title>
        <authorList>
            <person name="Adams M.D."/>
            <person name="Celniker S.E."/>
            <person name="Holt R.A."/>
            <person name="Evans C.A."/>
            <person name="Gocayne J.D."/>
            <person name="Amanatides P.G."/>
            <person name="Scherer S.E."/>
            <person name="Li P.W."/>
            <person name="Hoskins R.A."/>
            <person name="Galle R.F."/>
            <person name="George R.A."/>
            <person name="Lewis S.E."/>
            <person name="Richards S."/>
            <person name="Ashburner M."/>
            <person name="Henderson S.N."/>
            <person name="Sutton G.G."/>
            <person name="Wortman J.R."/>
            <person name="Yandell M.D."/>
            <person name="Zhang Q."/>
            <person name="Chen L.X."/>
            <person name="Brandon R.C."/>
            <person name="Rogers Y.-H.C."/>
            <person name="Blazej R.G."/>
            <person name="Champe M."/>
            <person name="Pfeiffer B.D."/>
            <person name="Wan K.H."/>
            <person name="Doyle C."/>
            <person name="Baxter E.G."/>
            <person name="Helt G."/>
            <person name="Nelson C.R."/>
            <person name="Miklos G.L.G."/>
            <person name="Abril J.F."/>
            <person name="Agbayani A."/>
            <person name="An H.-J."/>
            <person name="Andrews-Pfannkoch C."/>
            <person name="Baldwin D."/>
            <person name="Ballew R.M."/>
            <person name="Basu A."/>
            <person name="Baxendale J."/>
            <person name="Bayraktaroglu L."/>
            <person name="Beasley E.M."/>
            <person name="Beeson K.Y."/>
            <person name="Benos P.V."/>
            <person name="Berman B.P."/>
            <person name="Bhandari D."/>
            <person name="Bolshakov S."/>
            <person name="Borkova D."/>
            <person name="Botchan M.R."/>
            <person name="Bouck J."/>
            <person name="Brokstein P."/>
            <person name="Brottier P."/>
            <person name="Burtis K.C."/>
            <person name="Busam D.A."/>
            <person name="Butler H."/>
            <person name="Cadieu E."/>
            <person name="Center A."/>
            <person name="Chandra I."/>
            <person name="Cherry J.M."/>
            <person name="Cawley S."/>
            <person name="Dahlke C."/>
            <person name="Davenport L.B."/>
            <person name="Davies P."/>
            <person name="de Pablos B."/>
            <person name="Delcher A."/>
            <person name="Deng Z."/>
            <person name="Mays A.D."/>
            <person name="Dew I."/>
            <person name="Dietz S.M."/>
            <person name="Dodson K."/>
            <person name="Doup L.E."/>
            <person name="Downes M."/>
            <person name="Dugan-Rocha S."/>
            <person name="Dunkov B.C."/>
            <person name="Dunn P."/>
            <person name="Durbin K.J."/>
            <person name="Evangelista C.C."/>
            <person name="Ferraz C."/>
            <person name="Ferriera S."/>
            <person name="Fleischmann W."/>
            <person name="Fosler C."/>
            <person name="Gabrielian A.E."/>
            <person name="Garg N.S."/>
            <person name="Gelbart W.M."/>
            <person name="Glasser K."/>
            <person name="Glodek A."/>
            <person name="Gong F."/>
            <person name="Gorrell J.H."/>
            <person name="Gu Z."/>
            <person name="Guan P."/>
            <person name="Harris M."/>
            <person name="Harris N.L."/>
            <person name="Harvey D.A."/>
            <person name="Heiman T.J."/>
            <person name="Hernandez J.R."/>
            <person name="Houck J."/>
            <person name="Hostin D."/>
            <person name="Houston K.A."/>
            <person name="Howland T.J."/>
            <person name="Wei M.-H."/>
            <person name="Ibegwam C."/>
            <person name="Jalali M."/>
            <person name="Kalush F."/>
            <person name="Karpen G.H."/>
            <person name="Ke Z."/>
            <person name="Kennison J.A."/>
            <person name="Ketchum K.A."/>
            <person name="Kimmel B.E."/>
            <person name="Kodira C.D."/>
            <person name="Kraft C.L."/>
            <person name="Kravitz S."/>
            <person name="Kulp D."/>
            <person name="Lai Z."/>
            <person name="Lasko P."/>
            <person name="Lei Y."/>
            <person name="Levitsky A.A."/>
            <person name="Li J.H."/>
            <person name="Li Z."/>
            <person name="Liang Y."/>
            <person name="Lin X."/>
            <person name="Liu X."/>
            <person name="Mattei B."/>
            <person name="McIntosh T.C."/>
            <person name="McLeod M.P."/>
            <person name="McPherson D."/>
            <person name="Merkulov G."/>
            <person name="Milshina N.V."/>
            <person name="Mobarry C."/>
            <person name="Morris J."/>
            <person name="Moshrefi A."/>
            <person name="Mount S.M."/>
            <person name="Moy M."/>
            <person name="Murphy B."/>
            <person name="Murphy L."/>
            <person name="Muzny D.M."/>
            <person name="Nelson D.L."/>
            <person name="Nelson D.R."/>
            <person name="Nelson K.A."/>
            <person name="Nixon K."/>
            <person name="Nusskern D.R."/>
            <person name="Pacleb J.M."/>
            <person name="Palazzolo M."/>
            <person name="Pittman G.S."/>
            <person name="Pan S."/>
            <person name="Pollard J."/>
            <person name="Puri V."/>
            <person name="Reese M.G."/>
            <person name="Reinert K."/>
            <person name="Remington K."/>
            <person name="Saunders R.D.C."/>
            <person name="Scheeler F."/>
            <person name="Shen H."/>
            <person name="Shue B.C."/>
            <person name="Siden-Kiamos I."/>
            <person name="Simpson M."/>
            <person name="Skupski M.P."/>
            <person name="Smith T.J."/>
            <person name="Spier E."/>
            <person name="Spradling A.C."/>
            <person name="Stapleton M."/>
            <person name="Strong R."/>
            <person name="Sun E."/>
            <person name="Svirskas R."/>
            <person name="Tector C."/>
            <person name="Turner R."/>
            <person name="Venter E."/>
            <person name="Wang A.H."/>
            <person name="Wang X."/>
            <person name="Wang Z.-Y."/>
            <person name="Wassarman D.A."/>
            <person name="Weinstock G.M."/>
            <person name="Weissenbach J."/>
            <person name="Williams S.M."/>
            <person name="Woodage T."/>
            <person name="Worley K.C."/>
            <person name="Wu D."/>
            <person name="Yang S."/>
            <person name="Yao Q.A."/>
            <person name="Ye J."/>
            <person name="Yeh R.-F."/>
            <person name="Zaveri J.S."/>
            <person name="Zhan M."/>
            <person name="Zhang G."/>
            <person name="Zhao Q."/>
            <person name="Zheng L."/>
            <person name="Zheng X.H."/>
            <person name="Zhong F.N."/>
            <person name="Zhong W."/>
            <person name="Zhou X."/>
            <person name="Zhu S.C."/>
            <person name="Zhu X."/>
            <person name="Smith H.O."/>
            <person name="Gibbs R.A."/>
            <person name="Myers E.W."/>
            <person name="Rubin G.M."/>
            <person name="Venter J.C."/>
        </authorList>
    </citation>
    <scope>NUCLEOTIDE SEQUENCE [LARGE SCALE GENOMIC DNA]</scope>
    <source>
        <strain>Berkeley</strain>
    </source>
</reference>
<reference key="2">
    <citation type="journal article" date="2002" name="Genome Biol.">
        <title>Annotation of the Drosophila melanogaster euchromatic genome: a systematic review.</title>
        <authorList>
            <person name="Misra S."/>
            <person name="Crosby M.A."/>
            <person name="Mungall C.J."/>
            <person name="Matthews B.B."/>
            <person name="Campbell K.S."/>
            <person name="Hradecky P."/>
            <person name="Huang Y."/>
            <person name="Kaminker J.S."/>
            <person name="Millburn G.H."/>
            <person name="Prochnik S.E."/>
            <person name="Smith C.D."/>
            <person name="Tupy J.L."/>
            <person name="Whitfield E.J."/>
            <person name="Bayraktaroglu L."/>
            <person name="Berman B.P."/>
            <person name="Bettencourt B.R."/>
            <person name="Celniker S.E."/>
            <person name="de Grey A.D.N.J."/>
            <person name="Drysdale R.A."/>
            <person name="Harris N.L."/>
            <person name="Richter J."/>
            <person name="Russo S."/>
            <person name="Schroeder A.J."/>
            <person name="Shu S.Q."/>
            <person name="Stapleton M."/>
            <person name="Yamada C."/>
            <person name="Ashburner M."/>
            <person name="Gelbart W.M."/>
            <person name="Rubin G.M."/>
            <person name="Lewis S.E."/>
        </authorList>
    </citation>
    <scope>GENOME REANNOTATION</scope>
    <source>
        <strain>Berkeley</strain>
    </source>
</reference>
<reference key="3">
    <citation type="journal article" date="2002" name="Genome Biol.">
        <title>A Drosophila full-length cDNA resource.</title>
        <authorList>
            <person name="Stapleton M."/>
            <person name="Carlson J.W."/>
            <person name="Brokstein P."/>
            <person name="Yu C."/>
            <person name="Champe M."/>
            <person name="George R.A."/>
            <person name="Guarin H."/>
            <person name="Kronmiller B."/>
            <person name="Pacleb J.M."/>
            <person name="Park S."/>
            <person name="Wan K.H."/>
            <person name="Rubin G.M."/>
            <person name="Celniker S.E."/>
        </authorList>
    </citation>
    <scope>NUCLEOTIDE SEQUENCE [LARGE SCALE MRNA]</scope>
    <source>
        <strain>Berkeley</strain>
        <tissue>Embryo</tissue>
    </source>
</reference>
<reference key="4">
    <citation type="journal article" date="2001" name="Mol. Cell. Biol.">
        <title>Drosophila Mediator complex is broadly utilized by diverse gene-specific transcription factors at different types of core promoters.</title>
        <authorList>
            <person name="Park J.M."/>
            <person name="Gim B.S."/>
            <person name="Kim J.M."/>
            <person name="Yoon J.H."/>
            <person name="Kim H.-S."/>
            <person name="Kang J.-G."/>
            <person name="Kim Y.-J."/>
        </authorList>
    </citation>
    <scope>FUNCTION OF THE MEDIATOR COMPLEX</scope>
    <scope>IDENTIFICATION IN A COMPLEX WITH CDK8; MED6; MED14; MED17; MED18; MED20; MED21 AND MED31</scope>
    <scope>DEVELOPMENTAL STAGE</scope>
</reference>
<reference key="5">
    <citation type="journal article" date="2002" name="J. Biol. Chem.">
        <title>Novel Mediator proteins of the small Mediator complex in Drosophila SL2 cells.</title>
        <authorList>
            <person name="Gu J.-Y."/>
            <person name="Park J.M."/>
            <person name="Song E.J."/>
            <person name="Mizuguchi G."/>
            <person name="Yoon J.H."/>
            <person name="Kim-Ha J."/>
            <person name="Lee K.-J."/>
            <person name="Kim Y.-J."/>
        </authorList>
    </citation>
    <scope>IDENTIFICATION IN THE MEDIATOR COMPLEX</scope>
    <scope>INTERACTION WITH MED6; MED17; MED20; MED21 AND MED31</scope>
</reference>
<reference key="6">
    <citation type="journal article" date="2004" name="Nucleic Acids Res.">
        <title>A high resolution protein interaction map of the yeast Mediator complex.</title>
        <authorList>
            <person name="Guglielmi B."/>
            <person name="van Berkum N.L."/>
            <person name="Klapholz B."/>
            <person name="Bijma T."/>
            <person name="Boube M."/>
            <person name="Boschiero C."/>
            <person name="Bourbon H.-M."/>
            <person name="Holstege F.C.P."/>
            <person name="Werner M."/>
        </authorList>
    </citation>
    <scope>INTERACTION WITH MED10 AND MED21</scope>
</reference>
<reference key="7">
    <citation type="journal article" date="2006" name="Genes Dev.">
        <title>Coactivator cross-talk specifies transcriptional output.</title>
        <authorList>
            <person name="Marr M.T. II"/>
            <person name="Isogai Y."/>
            <person name="Wright K.J."/>
            <person name="Tjian R."/>
        </authorList>
    </citation>
    <scope>FUNCTION</scope>
</reference>
<evidence type="ECO:0000250" key="1"/>
<evidence type="ECO:0000255" key="2"/>
<evidence type="ECO:0000256" key="3">
    <source>
        <dbReference type="SAM" id="MobiDB-lite"/>
    </source>
</evidence>
<evidence type="ECO:0000269" key="4">
    <source>
    </source>
</evidence>
<evidence type="ECO:0000269" key="5">
    <source>
    </source>
</evidence>
<evidence type="ECO:0000269" key="6">
    <source>
    </source>
</evidence>
<evidence type="ECO:0000269" key="7">
    <source>
    </source>
</evidence>
<evidence type="ECO:0000305" key="8"/>
<gene>
    <name type="primary">MED4</name>
    <name type="synonym">Trap36</name>
    <name type="ORF">CG8609</name>
</gene>
<protein>
    <recommendedName>
        <fullName>Mediator of RNA polymerase II transcription subunit 4</fullName>
    </recommendedName>
    <alternativeName>
        <fullName>Mediator complex subunit 4</fullName>
    </alternativeName>
    <alternativeName>
        <fullName>dp34</fullName>
    </alternativeName>
</protein>
<proteinExistence type="evidence at protein level"/>
<sequence>MSFHLSTKERLLLLIDDIEMIAKELIEQAHQKISSTELVDLLDLLVAKDEEFRKMLELAEEQAKVEEAMDQLRAKVEVHDREIQKLQKSLKDAELILSTAIFQARQKLASINQANKRPVSSEELIKYAHRISSANAVSAPLTWCIGDLRRPYPTDIEMRNGLLGKSEQNINGGTVTHQNSGMPSEQQRTLSGSAGSGSGSGAGGEVPNAFQNQFNWNLGELHMTMGASGNTVALETRAQDDVEVMSTDSSSSSSSDSQ</sequence>